<evidence type="ECO:0000269" key="1">
    <source>
    </source>
</evidence>
<evidence type="ECO:0000269" key="2">
    <source>
    </source>
</evidence>
<evidence type="ECO:0000303" key="3">
    <source>
    </source>
</evidence>
<evidence type="ECO:0000305" key="4"/>
<evidence type="ECO:0000312" key="5">
    <source>
        <dbReference type="EMBL" id="AAZ70417.1"/>
    </source>
</evidence>
<sequence length="152" mass="17367">MDKTDVKLLKLVQDGIPITHSPFKGFASELGISEQEVVDRLKNLQKAGKIRRFAASIGHRAIGITANAMCVWNVPDEQIETVGNIMAEFPEVTHCYERPRYPDWPYNLFTMVHSYTPEDCEKVAVRISEATGIRDYTLFFSEREFKKTGVRL</sequence>
<name>AHBB_METBF</name>
<keyword id="KW-0350">Heme biosynthesis</keyword>
<keyword id="KW-0456">Lyase</keyword>
<proteinExistence type="evidence at protein level"/>
<protein>
    <recommendedName>
        <fullName evidence="4">Siroheme decarboxylase beta subunit</fullName>
        <ecNumber evidence="1 2">4.1.1.111</ecNumber>
    </recommendedName>
    <alternativeName>
        <fullName evidence="3">SH decarboxylase AhbAB</fullName>
    </alternativeName>
</protein>
<comment type="function">
    <text evidence="1 2">Involved in siroheme-dependent heme b biosynthesis. Catalyzes the decarboxylation of siroheme into didecarboxysiroheme.</text>
</comment>
<comment type="catalytic activity">
    <reaction evidence="1 2">
        <text>siroheme + 2 H(+) = 12,18-didecarboxysiroheme + 2 CO2</text>
        <dbReference type="Rhea" id="RHEA:19093"/>
        <dbReference type="ChEBI" id="CHEBI:15378"/>
        <dbReference type="ChEBI" id="CHEBI:16526"/>
        <dbReference type="ChEBI" id="CHEBI:60052"/>
        <dbReference type="ChEBI" id="CHEBI:140497"/>
        <dbReference type="EC" id="4.1.1.111"/>
    </reaction>
</comment>
<comment type="activity regulation">
    <text evidence="1 2">Binds heme b (PubMed:24669201, PubMed:24865947). The redox state of the heme b modulates the activity of the enzyme (PubMed:24865947). Activity is stimulated by sodium dithionite (PubMed:24865947).</text>
</comment>
<comment type="pathway">
    <text evidence="1 2">Porphyrin-containing compound metabolism; protoheme biosynthesis.</text>
</comment>
<comment type="subunit">
    <text evidence="1 2">Forms a heterodimer composed of AhbA and AhbB.</text>
</comment>
<comment type="similarity">
    <text evidence="4">Belongs to the Ahb/Nir family.</text>
</comment>
<reference key="1">
    <citation type="journal article" date="2006" name="J. Bacteriol.">
        <title>The Methanosarcina barkeri genome: comparative analysis with Methanosarcina acetivorans and Methanosarcina mazei reveals extensive rearrangement within methanosarcinal genomes.</title>
        <authorList>
            <person name="Maeder D.L."/>
            <person name="Anderson I."/>
            <person name="Brettin T.S."/>
            <person name="Bruce D.C."/>
            <person name="Gilna P."/>
            <person name="Han C.S."/>
            <person name="Lapidus A."/>
            <person name="Metcalf W.W."/>
            <person name="Saunders E."/>
            <person name="Tapia R."/>
            <person name="Sowers K.R."/>
        </authorList>
    </citation>
    <scope>NUCLEOTIDE SEQUENCE [LARGE SCALE GENOMIC DNA]</scope>
    <source>
        <strain>Fusaro / DSM 804</strain>
    </source>
</reference>
<reference key="2">
    <citation type="journal article" date="2014" name="Archaea">
        <title>The alternative route to heme in the methanogenic archaeon Methanosarcina barkeri.</title>
        <authorList>
            <person name="Kuehner M."/>
            <person name="Haufschildt K."/>
            <person name="Neumann A."/>
            <person name="Storbeck S."/>
            <person name="Streif J."/>
            <person name="Layer G."/>
        </authorList>
    </citation>
    <scope>FUNCTION</scope>
    <scope>CATALYTIC ACTIVITY</scope>
    <scope>ACTIVITY REGULATION</scope>
    <scope>PATHWAY</scope>
    <scope>SUBUNIT</scope>
</reference>
<reference key="3">
    <citation type="journal article" date="2014" name="Mol. Microbiol.">
        <title>The structure, function and properties of sirohaem decarboxylase--an enzyme with structural homology to a transcription factor family that is part of the alternative haem biosynthesis pathway.</title>
        <authorList>
            <person name="Palmer D.J."/>
            <person name="Schroeder S."/>
            <person name="Lawrence A.D."/>
            <person name="Deery E."/>
            <person name="Lobo S.A."/>
            <person name="Saraiva L.M."/>
            <person name="McLean K.J."/>
            <person name="Munro A.W."/>
            <person name="Ferguson S.J."/>
            <person name="Pickersgill R.W."/>
            <person name="Brown D.G."/>
            <person name="Warren M.J."/>
        </authorList>
    </citation>
    <scope>FUNCTION</scope>
    <scope>CATALYTIC ACTIVITY</scope>
    <scope>ACTIVITY REGULATION</scope>
    <scope>PATHWAY</scope>
    <scope>SUBUNIT</scope>
</reference>
<feature type="chain" id="PRO_0000450509" description="Siroheme decarboxylase beta subunit">
    <location>
        <begin position="1"/>
        <end position="152"/>
    </location>
</feature>
<accession>Q46CH5</accession>
<dbReference type="EC" id="4.1.1.111" evidence="1 2"/>
<dbReference type="EMBL" id="CP000099">
    <property type="protein sequence ID" value="AAZ70417.1"/>
    <property type="molecule type" value="Genomic_DNA"/>
</dbReference>
<dbReference type="SMR" id="Q46CH5"/>
<dbReference type="STRING" id="269797.Mbar_A1460"/>
<dbReference type="PaxDb" id="269797-Mbar_A1460"/>
<dbReference type="KEGG" id="mba:Mbar_A1460"/>
<dbReference type="eggNOG" id="arCOG01628">
    <property type="taxonomic scope" value="Archaea"/>
</dbReference>
<dbReference type="HOGENOM" id="CLU_112007_0_1_2"/>
<dbReference type="OrthoDB" id="145939at2157"/>
<dbReference type="BRENDA" id="4.1.1.111">
    <property type="organism ID" value="3250"/>
</dbReference>
<dbReference type="UniPathway" id="UPA00252"/>
<dbReference type="GO" id="GO:0016829">
    <property type="term" value="F:lyase activity"/>
    <property type="evidence" value="ECO:0007669"/>
    <property type="project" value="UniProtKB-KW"/>
</dbReference>
<dbReference type="GO" id="GO:0006783">
    <property type="term" value="P:heme biosynthetic process"/>
    <property type="evidence" value="ECO:0007669"/>
    <property type="project" value="UniProtKB-KW"/>
</dbReference>
<dbReference type="Gene3D" id="3.30.70.3460">
    <property type="match status" value="1"/>
</dbReference>
<dbReference type="InterPro" id="IPR053431">
    <property type="entry name" value="AhbB-like"/>
</dbReference>
<dbReference type="InterPro" id="IPR040523">
    <property type="entry name" value="AsnC_trans_reg2"/>
</dbReference>
<dbReference type="InterPro" id="IPR050684">
    <property type="entry name" value="HTH-Siroheme_Decarb"/>
</dbReference>
<dbReference type="InterPro" id="IPR053953">
    <property type="entry name" value="NirdL-like_HTH"/>
</dbReference>
<dbReference type="InterPro" id="IPR019888">
    <property type="entry name" value="Tscrpt_reg_AsnC-like"/>
</dbReference>
<dbReference type="InterPro" id="IPR036390">
    <property type="entry name" value="WH_DNA-bd_sf"/>
</dbReference>
<dbReference type="NCBIfam" id="NF040707">
    <property type="entry name" value="Siroheme_Dcarb_AhbB"/>
    <property type="match status" value="1"/>
</dbReference>
<dbReference type="PANTHER" id="PTHR43413:SF1">
    <property type="entry name" value="SIROHEME DECARBOXYLASE NIRL SUBUNIT"/>
    <property type="match status" value="1"/>
</dbReference>
<dbReference type="PANTHER" id="PTHR43413">
    <property type="entry name" value="TRANSCRIPTIONAL REGULATOR, ASNC FAMILY"/>
    <property type="match status" value="1"/>
</dbReference>
<dbReference type="Pfam" id="PF17805">
    <property type="entry name" value="AsnC_trans_reg2"/>
    <property type="match status" value="1"/>
</dbReference>
<dbReference type="Pfam" id="PF22451">
    <property type="entry name" value="NirdL-like_HTH"/>
    <property type="match status" value="1"/>
</dbReference>
<dbReference type="SMART" id="SM00344">
    <property type="entry name" value="HTH_ASNC"/>
    <property type="match status" value="1"/>
</dbReference>
<dbReference type="SUPFAM" id="SSF46785">
    <property type="entry name" value="Winged helix' DNA-binding domain"/>
    <property type="match status" value="1"/>
</dbReference>
<gene>
    <name evidence="3" type="primary">ahbB</name>
    <name evidence="5" type="ordered locus">Mbar_A1460</name>
</gene>
<organism>
    <name type="scientific">Methanosarcina barkeri (strain Fusaro / DSM 804)</name>
    <dbReference type="NCBI Taxonomy" id="269797"/>
    <lineage>
        <taxon>Archaea</taxon>
        <taxon>Methanobacteriati</taxon>
        <taxon>Methanobacteriota</taxon>
        <taxon>Stenosarchaea group</taxon>
        <taxon>Methanomicrobia</taxon>
        <taxon>Methanosarcinales</taxon>
        <taxon>Methanosarcinaceae</taxon>
        <taxon>Methanosarcina</taxon>
    </lineage>
</organism>